<comment type="function">
    <text>Protamines substitute for histones in the chromatin of sperm during the haploid phase of spermatogenesis. They compact sperm DNA into a highly condensed, stable and inactive complex.</text>
</comment>
<comment type="subcellular location">
    <subcellularLocation>
        <location>Nucleus</location>
    </subcellularLocation>
    <subcellularLocation>
        <location>Chromosome</location>
    </subcellularLocation>
</comment>
<comment type="tissue specificity">
    <text>Testis.</text>
</comment>
<comment type="similarity">
    <text evidence="2">Belongs to the protamine P1 family.</text>
</comment>
<accession>O18748</accession>
<sequence>MARCRRHIRSRSRSRNQCQRRRRRSHYNRRRTYRRSRRHSRRRRVRRRGCSCRRCSRRRRRRC</sequence>
<proteinExistence type="evidence at transcript level"/>
<keyword id="KW-0158">Chromosome</keyword>
<keyword id="KW-0217">Developmental protein</keyword>
<keyword id="KW-0221">Differentiation</keyword>
<keyword id="KW-0226">DNA condensation</keyword>
<keyword id="KW-0238">DNA-binding</keyword>
<keyword id="KW-0544">Nucleosome core</keyword>
<keyword id="KW-0539">Nucleus</keyword>
<keyword id="KW-0744">Spermatogenesis</keyword>
<evidence type="ECO:0000256" key="1">
    <source>
        <dbReference type="SAM" id="MobiDB-lite"/>
    </source>
</evidence>
<evidence type="ECO:0000305" key="2"/>
<gene>
    <name type="primary">PRM1</name>
</gene>
<name>HSP1_PLATE</name>
<organism>
    <name type="scientific">Planigale tenuirostris</name>
    <name type="common">Narrow-nosed planigale</name>
    <dbReference type="NCBI Taxonomy" id="32557"/>
    <lineage>
        <taxon>Eukaryota</taxon>
        <taxon>Metazoa</taxon>
        <taxon>Chordata</taxon>
        <taxon>Craniata</taxon>
        <taxon>Vertebrata</taxon>
        <taxon>Euteleostomi</taxon>
        <taxon>Mammalia</taxon>
        <taxon>Metatheria</taxon>
        <taxon>Dasyuromorphia</taxon>
        <taxon>Dasyuridae</taxon>
        <taxon>Planigale</taxon>
    </lineage>
</organism>
<reference key="1">
    <citation type="journal article" date="1997" name="Mol. Phylogenet. Evol.">
        <title>A multigene assessment of phylogenetic relationships within the dasyurid marsupial subfamily Sminthopsinae.</title>
        <authorList>
            <person name="Krajewski C."/>
            <person name="Blacket M."/>
            <person name="Buckley L."/>
            <person name="Westerman M."/>
        </authorList>
    </citation>
    <scope>NUCLEOTIDE SEQUENCE [GENOMIC DNA]</scope>
</reference>
<protein>
    <recommendedName>
        <fullName>Sperm protamine P1</fullName>
    </recommendedName>
</protein>
<feature type="chain" id="PRO_0000191537" description="Sperm protamine P1">
    <location>
        <begin position="1"/>
        <end position="63"/>
    </location>
</feature>
<feature type="region of interest" description="Disordered" evidence="1">
    <location>
        <begin position="1"/>
        <end position="47"/>
    </location>
</feature>
<dbReference type="EMBL" id="AF001594">
    <property type="protein sequence ID" value="AAB91384.1"/>
    <property type="molecule type" value="Genomic_DNA"/>
</dbReference>
<dbReference type="GO" id="GO:0000786">
    <property type="term" value="C:nucleosome"/>
    <property type="evidence" value="ECO:0007669"/>
    <property type="project" value="UniProtKB-KW"/>
</dbReference>
<dbReference type="GO" id="GO:0005634">
    <property type="term" value="C:nucleus"/>
    <property type="evidence" value="ECO:0007669"/>
    <property type="project" value="UniProtKB-SubCell"/>
</dbReference>
<dbReference type="GO" id="GO:0003677">
    <property type="term" value="F:DNA binding"/>
    <property type="evidence" value="ECO:0007669"/>
    <property type="project" value="UniProtKB-KW"/>
</dbReference>
<dbReference type="GO" id="GO:0030154">
    <property type="term" value="P:cell differentiation"/>
    <property type="evidence" value="ECO:0007669"/>
    <property type="project" value="UniProtKB-KW"/>
</dbReference>
<dbReference type="GO" id="GO:0030261">
    <property type="term" value="P:chromosome condensation"/>
    <property type="evidence" value="ECO:0007669"/>
    <property type="project" value="UniProtKB-KW"/>
</dbReference>
<dbReference type="GO" id="GO:0007283">
    <property type="term" value="P:spermatogenesis"/>
    <property type="evidence" value="ECO:0007669"/>
    <property type="project" value="UniProtKB-KW"/>
</dbReference>